<protein>
    <recommendedName>
        <fullName>Actin cytoskeleton-regulatory complex protein SLA1</fullName>
    </recommendedName>
</protein>
<proteinExistence type="evidence at protein level"/>
<keyword id="KW-0009">Actin-binding</keyword>
<keyword id="KW-1003">Cell membrane</keyword>
<keyword id="KW-0963">Cytoplasm</keyword>
<keyword id="KW-0206">Cytoskeleton</keyword>
<keyword id="KW-0254">Endocytosis</keyword>
<keyword id="KW-0967">Endosome</keyword>
<keyword id="KW-0472">Membrane</keyword>
<keyword id="KW-0539">Nucleus</keyword>
<keyword id="KW-0597">Phosphoprotein</keyword>
<keyword id="KW-1185">Reference proteome</keyword>
<keyword id="KW-0677">Repeat</keyword>
<keyword id="KW-0728">SH3 domain</keyword>
<dbReference type="EMBL" id="CP017624">
    <property type="protein sequence ID" value="AOW27210.1"/>
    <property type="molecule type" value="Genomic_DNA"/>
</dbReference>
<dbReference type="RefSeq" id="XP_722523.1">
    <property type="nucleotide sequence ID" value="XM_717430.1"/>
</dbReference>
<dbReference type="SMR" id="Q5ALV2"/>
<dbReference type="BioGRID" id="1218833">
    <property type="interactions" value="3"/>
</dbReference>
<dbReference type="FunCoup" id="Q5ALV2">
    <property type="interactions" value="169"/>
</dbReference>
<dbReference type="STRING" id="237561.Q5ALV2"/>
<dbReference type="EnsemblFungi" id="C2_01640W_A-T">
    <property type="protein sequence ID" value="C2_01640W_A-T-p1"/>
    <property type="gene ID" value="C2_01640W_A"/>
</dbReference>
<dbReference type="GeneID" id="3635739"/>
<dbReference type="KEGG" id="cal:CAALFM_C201640WA"/>
<dbReference type="CGD" id="CAL0000198859">
    <property type="gene designation" value="SLA1"/>
</dbReference>
<dbReference type="VEuPathDB" id="FungiDB:C2_01640W_A"/>
<dbReference type="eggNOG" id="ENOG502QQC3">
    <property type="taxonomic scope" value="Eukaryota"/>
</dbReference>
<dbReference type="HOGENOM" id="CLU_003674_0_0_1"/>
<dbReference type="InParanoid" id="Q5ALV2"/>
<dbReference type="OMA" id="FMAQGED"/>
<dbReference type="OrthoDB" id="26539at2759"/>
<dbReference type="PRO" id="PR:Q5ALV2"/>
<dbReference type="Proteomes" id="UP000000559">
    <property type="component" value="Chromosome 2"/>
</dbReference>
<dbReference type="GO" id="GO:0030479">
    <property type="term" value="C:actin cortical patch"/>
    <property type="evidence" value="ECO:0007669"/>
    <property type="project" value="UniProtKB-SubCell"/>
</dbReference>
<dbReference type="GO" id="GO:0051286">
    <property type="term" value="C:cell tip"/>
    <property type="evidence" value="ECO:0007669"/>
    <property type="project" value="UniProtKB-SubCell"/>
</dbReference>
<dbReference type="GO" id="GO:0010008">
    <property type="term" value="C:endosome membrane"/>
    <property type="evidence" value="ECO:0007669"/>
    <property type="project" value="UniProtKB-SubCell"/>
</dbReference>
<dbReference type="GO" id="GO:0005634">
    <property type="term" value="C:nucleus"/>
    <property type="evidence" value="ECO:0000318"/>
    <property type="project" value="GO_Central"/>
</dbReference>
<dbReference type="GO" id="GO:0005886">
    <property type="term" value="C:plasma membrane"/>
    <property type="evidence" value="ECO:0007669"/>
    <property type="project" value="UniProtKB-SubCell"/>
</dbReference>
<dbReference type="GO" id="GO:0030427">
    <property type="term" value="C:site of polarized growth"/>
    <property type="evidence" value="ECO:0000314"/>
    <property type="project" value="CGD"/>
</dbReference>
<dbReference type="GO" id="GO:0003779">
    <property type="term" value="F:actin binding"/>
    <property type="evidence" value="ECO:0007669"/>
    <property type="project" value="UniProtKB-KW"/>
</dbReference>
<dbReference type="GO" id="GO:0042802">
    <property type="term" value="F:identical protein binding"/>
    <property type="evidence" value="ECO:0007669"/>
    <property type="project" value="InterPro"/>
</dbReference>
<dbReference type="GO" id="GO:0030674">
    <property type="term" value="F:protein-macromolecule adaptor activity"/>
    <property type="evidence" value="ECO:0007669"/>
    <property type="project" value="InterPro"/>
</dbReference>
<dbReference type="GO" id="GO:0001221">
    <property type="term" value="F:transcription coregulator binding"/>
    <property type="evidence" value="ECO:0000314"/>
    <property type="project" value="CGD"/>
</dbReference>
<dbReference type="GO" id="GO:0043130">
    <property type="term" value="F:ubiquitin binding"/>
    <property type="evidence" value="ECO:0007669"/>
    <property type="project" value="InterPro"/>
</dbReference>
<dbReference type="GO" id="GO:0000147">
    <property type="term" value="P:actin cortical patch assembly"/>
    <property type="evidence" value="ECO:0000315"/>
    <property type="project" value="CGD"/>
</dbReference>
<dbReference type="GO" id="GO:0030036">
    <property type="term" value="P:actin cytoskeleton organization"/>
    <property type="evidence" value="ECO:0000315"/>
    <property type="project" value="CGD"/>
</dbReference>
<dbReference type="GO" id="GO:0071466">
    <property type="term" value="P:cellular response to xenobiotic stimulus"/>
    <property type="evidence" value="ECO:0000315"/>
    <property type="project" value="CGD"/>
</dbReference>
<dbReference type="GO" id="GO:0006897">
    <property type="term" value="P:endocytosis"/>
    <property type="evidence" value="ECO:0000315"/>
    <property type="project" value="CGD"/>
</dbReference>
<dbReference type="GO" id="GO:0009272">
    <property type="term" value="P:fungal-type cell wall biogenesis"/>
    <property type="evidence" value="ECO:0000315"/>
    <property type="project" value="CGD"/>
</dbReference>
<dbReference type="GO" id="GO:0030448">
    <property type="term" value="P:hyphal growth"/>
    <property type="evidence" value="ECO:0000315"/>
    <property type="project" value="CGD"/>
</dbReference>
<dbReference type="GO" id="GO:0030833">
    <property type="term" value="P:regulation of actin filament polymerization"/>
    <property type="evidence" value="ECO:0000318"/>
    <property type="project" value="GO_Central"/>
</dbReference>
<dbReference type="CDD" id="cd09532">
    <property type="entry name" value="SAM_SLA1_fungal"/>
    <property type="match status" value="1"/>
</dbReference>
<dbReference type="CDD" id="cd11773">
    <property type="entry name" value="SH3_Sla1p_1"/>
    <property type="match status" value="1"/>
</dbReference>
<dbReference type="CDD" id="cd11774">
    <property type="entry name" value="SH3_Sla1p_2"/>
    <property type="match status" value="1"/>
</dbReference>
<dbReference type="CDD" id="cd11775">
    <property type="entry name" value="SH3_Sla1p_3"/>
    <property type="match status" value="1"/>
</dbReference>
<dbReference type="FunFam" id="1.10.150.50:FF:000094">
    <property type="entry name" value="Actin cytoskeleton-regulatory complex protein SLA1"/>
    <property type="match status" value="1"/>
</dbReference>
<dbReference type="FunFam" id="2.30.30.40:FF:000300">
    <property type="entry name" value="Actin cytoskeleton-regulatory complex protein SLA1"/>
    <property type="match status" value="1"/>
</dbReference>
<dbReference type="FunFam" id="2.30.30.700:FF:000001">
    <property type="entry name" value="Actin cytoskeleton-regulatory complex protein SLA1"/>
    <property type="match status" value="1"/>
</dbReference>
<dbReference type="FunFam" id="2.30.30.40:FF:000328">
    <property type="entry name" value="Actin cytoskeleton-regulatory complex protein sla1"/>
    <property type="match status" value="1"/>
</dbReference>
<dbReference type="Gene3D" id="2.30.30.40">
    <property type="entry name" value="SH3 Domains"/>
    <property type="match status" value="3"/>
</dbReference>
<dbReference type="Gene3D" id="2.30.30.700">
    <property type="entry name" value="SLA1 homology domain 1"/>
    <property type="match status" value="1"/>
</dbReference>
<dbReference type="Gene3D" id="1.10.150.50">
    <property type="entry name" value="Transcription Factor, Ets-1"/>
    <property type="match status" value="1"/>
</dbReference>
<dbReference type="InterPro" id="IPR056996">
    <property type="entry name" value="PH_SLA1"/>
</dbReference>
<dbReference type="InterPro" id="IPR013761">
    <property type="entry name" value="SAM/pointed_sf"/>
</dbReference>
<dbReference type="InterPro" id="IPR036028">
    <property type="entry name" value="SH3-like_dom_sf"/>
</dbReference>
<dbReference type="InterPro" id="IPR001452">
    <property type="entry name" value="SH3_domain"/>
</dbReference>
<dbReference type="InterPro" id="IPR007131">
    <property type="entry name" value="SHD1"/>
</dbReference>
<dbReference type="InterPro" id="IPR035800">
    <property type="entry name" value="Sla1_SH3_1"/>
</dbReference>
<dbReference type="InterPro" id="IPR035821">
    <property type="entry name" value="Sla1_SH3_3"/>
</dbReference>
<dbReference type="PANTHER" id="PTHR15735:SF19">
    <property type="entry name" value="ACTIN CYTOSKELETON-REGULATORY COMPLEX PROTEIN SLA1"/>
    <property type="match status" value="1"/>
</dbReference>
<dbReference type="PANTHER" id="PTHR15735">
    <property type="entry name" value="FCH AND DOUBLE SH3 DOMAINS PROTEIN"/>
    <property type="match status" value="1"/>
</dbReference>
<dbReference type="Pfam" id="PF24081">
    <property type="entry name" value="PH_SLA1"/>
    <property type="match status" value="1"/>
</dbReference>
<dbReference type="Pfam" id="PF00018">
    <property type="entry name" value="SH3_1"/>
    <property type="match status" value="3"/>
</dbReference>
<dbReference type="Pfam" id="PF03983">
    <property type="entry name" value="SHD1"/>
    <property type="match status" value="1"/>
</dbReference>
<dbReference type="PRINTS" id="PR00452">
    <property type="entry name" value="SH3DOMAIN"/>
</dbReference>
<dbReference type="SMART" id="SM00326">
    <property type="entry name" value="SH3"/>
    <property type="match status" value="3"/>
</dbReference>
<dbReference type="SUPFAM" id="SSF50044">
    <property type="entry name" value="SH3-domain"/>
    <property type="match status" value="3"/>
</dbReference>
<dbReference type="PROSITE" id="PS50002">
    <property type="entry name" value="SH3"/>
    <property type="match status" value="3"/>
</dbReference>
<reference key="1">
    <citation type="journal article" date="2004" name="Proc. Natl. Acad. Sci. U.S.A.">
        <title>The diploid genome sequence of Candida albicans.</title>
        <authorList>
            <person name="Jones T."/>
            <person name="Federspiel N.A."/>
            <person name="Chibana H."/>
            <person name="Dungan J."/>
            <person name="Kalman S."/>
            <person name="Magee B.B."/>
            <person name="Newport G."/>
            <person name="Thorstenson Y.R."/>
            <person name="Agabian N."/>
            <person name="Magee P.T."/>
            <person name="Davis R.W."/>
            <person name="Scherer S."/>
        </authorList>
    </citation>
    <scope>NUCLEOTIDE SEQUENCE [LARGE SCALE GENOMIC DNA]</scope>
    <source>
        <strain>SC5314 / ATCC MYA-2876</strain>
    </source>
</reference>
<reference key="2">
    <citation type="journal article" date="2007" name="Genome Biol.">
        <title>Assembly of the Candida albicans genome into sixteen supercontigs aligned on the eight chromosomes.</title>
        <authorList>
            <person name="van het Hoog M."/>
            <person name="Rast T.J."/>
            <person name="Martchenko M."/>
            <person name="Grindle S."/>
            <person name="Dignard D."/>
            <person name="Hogues H."/>
            <person name="Cuomo C."/>
            <person name="Berriman M."/>
            <person name="Scherer S."/>
            <person name="Magee B.B."/>
            <person name="Whiteway M."/>
            <person name="Chibana H."/>
            <person name="Nantel A."/>
            <person name="Magee P.T."/>
        </authorList>
    </citation>
    <scope>GENOME REANNOTATION</scope>
    <source>
        <strain>SC5314 / ATCC MYA-2876</strain>
    </source>
</reference>
<reference key="3">
    <citation type="journal article" date="2013" name="Genome Biol.">
        <title>Assembly of a phased diploid Candida albicans genome facilitates allele-specific measurements and provides a simple model for repeat and indel structure.</title>
        <authorList>
            <person name="Muzzey D."/>
            <person name="Schwartz K."/>
            <person name="Weissman J.S."/>
            <person name="Sherlock G."/>
        </authorList>
    </citation>
    <scope>NUCLEOTIDE SEQUENCE [LARGE SCALE GENOMIC DNA]</scope>
    <scope>GENOME REANNOTATION</scope>
    <source>
        <strain>SC5314 / ATCC MYA-2876</strain>
    </source>
</reference>
<reference key="4">
    <citation type="journal article" date="2001" name="Mol. Microbiol.">
        <title>Transcript profiling in Candida albicans reveals new cellular functions for the transcriptional repressors CaTup1, CaMig1 and CaNrg1.</title>
        <authorList>
            <person name="Murad A.M."/>
            <person name="d'Enfert C."/>
            <person name="Gaillardin C."/>
            <person name="Tournu H."/>
            <person name="Tekaia F."/>
            <person name="Talibi D."/>
            <person name="Marechal D."/>
            <person name="Marchais V."/>
            <person name="Cottin J."/>
            <person name="Brown A.J."/>
        </authorList>
    </citation>
    <scope>INDUCTION</scope>
</reference>
<reference key="5">
    <citation type="journal article" date="2010" name="Curr. Genet.">
        <title>Candida albicans SH3-domain proteins involved in hyphal growth, cytokinesis, and vacuolar morphology.</title>
        <authorList>
            <person name="Reijnst P."/>
            <person name="Jorde S."/>
            <person name="Wendland J."/>
        </authorList>
    </citation>
    <scope>SUBCELLULAR LOCATION</scope>
    <scope>DOMAIN</scope>
    <scope>FUNCTION</scope>
</reference>
<reference key="6">
    <citation type="journal article" date="2012" name="Mol. Biol. Cell">
        <title>Cdc28-Cln3 phosphorylation of Sla1 regulates actin patch dynamics in different modes of fungal growth.</title>
        <authorList>
            <person name="Zeng G."/>
            <person name="Wang Y.M."/>
            <person name="Wang Y."/>
        </authorList>
    </citation>
    <scope>INTERACTION WITH CLN3 AND PAN1</scope>
    <scope>PHOSPHORYLATION BY CDC28-CLN3 AND PRK1</scope>
    <scope>SUBCELLULAR LOCATION</scope>
    <scope>FUNCTION</scope>
</reference>
<name>SLA1_CANAL</name>
<gene>
    <name type="primary">SLA1</name>
    <name type="ordered locus">CAALFM_C201640WA</name>
    <name type="ORF">CaO19.1474</name>
    <name type="ORF">CaO19.9049</name>
</gene>
<organism>
    <name type="scientific">Candida albicans (strain SC5314 / ATCC MYA-2876)</name>
    <name type="common">Yeast</name>
    <dbReference type="NCBI Taxonomy" id="237561"/>
    <lineage>
        <taxon>Eukaryota</taxon>
        <taxon>Fungi</taxon>
        <taxon>Dikarya</taxon>
        <taxon>Ascomycota</taxon>
        <taxon>Saccharomycotina</taxon>
        <taxon>Pichiomycetes</taxon>
        <taxon>Debaryomycetaceae</taxon>
        <taxon>Candida/Lodderomyces clade</taxon>
        <taxon>Candida</taxon>
    </lineage>
</organism>
<feature type="chain" id="PRO_0000424376" description="Actin cytoskeleton-regulatory complex protein SLA1">
    <location>
        <begin position="1"/>
        <end position="1257"/>
    </location>
</feature>
<feature type="domain" description="SH3 1" evidence="2">
    <location>
        <begin position="4"/>
        <end position="74"/>
    </location>
</feature>
<feature type="domain" description="SH3 2" evidence="2">
    <location>
        <begin position="75"/>
        <end position="134"/>
    </location>
</feature>
<feature type="domain" description="SH3 3" evidence="2">
    <location>
        <begin position="396"/>
        <end position="458"/>
    </location>
</feature>
<feature type="region of interest" description="Disordered" evidence="3">
    <location>
        <begin position="133"/>
        <end position="252"/>
    </location>
</feature>
<feature type="region of interest" description="Disordered" evidence="3">
    <location>
        <begin position="464"/>
        <end position="523"/>
    </location>
</feature>
<feature type="region of interest" description="Disordered" evidence="3">
    <location>
        <begin position="596"/>
        <end position="621"/>
    </location>
</feature>
<feature type="region of interest" description="Disordered" evidence="3">
    <location>
        <begin position="718"/>
        <end position="737"/>
    </location>
</feature>
<feature type="region of interest" description="Disordered" evidence="3">
    <location>
        <begin position="789"/>
        <end position="867"/>
    </location>
</feature>
<feature type="region of interest" description="Disordered" evidence="3">
    <location>
        <begin position="1057"/>
        <end position="1168"/>
    </location>
</feature>
<feature type="region of interest" description="Disordered" evidence="3">
    <location>
        <begin position="1207"/>
        <end position="1257"/>
    </location>
</feature>
<feature type="compositionally biased region" description="Low complexity" evidence="3">
    <location>
        <begin position="137"/>
        <end position="169"/>
    </location>
</feature>
<feature type="compositionally biased region" description="Basic and acidic residues" evidence="3">
    <location>
        <begin position="189"/>
        <end position="227"/>
    </location>
</feature>
<feature type="compositionally biased region" description="Basic and acidic residues" evidence="3">
    <location>
        <begin position="493"/>
        <end position="511"/>
    </location>
</feature>
<feature type="compositionally biased region" description="Low complexity" evidence="3">
    <location>
        <begin position="605"/>
        <end position="615"/>
    </location>
</feature>
<feature type="compositionally biased region" description="Polar residues" evidence="3">
    <location>
        <begin position="846"/>
        <end position="858"/>
    </location>
</feature>
<feature type="compositionally biased region" description="Polar residues" evidence="3">
    <location>
        <begin position="1057"/>
        <end position="1075"/>
    </location>
</feature>
<feature type="compositionally biased region" description="Polar residues" evidence="3">
    <location>
        <begin position="1082"/>
        <end position="1111"/>
    </location>
</feature>
<feature type="compositionally biased region" description="Polar residues" evidence="3">
    <location>
        <begin position="1117"/>
        <end position="1135"/>
    </location>
</feature>
<feature type="compositionally biased region" description="Low complexity" evidence="3">
    <location>
        <begin position="1136"/>
        <end position="1168"/>
    </location>
</feature>
<sequence length="1257" mass="138870">MSSIYIGVYKALYDYAAQAEEELNIKQNDLLYLLEKSDIDDWWKVKKRVVATGEEIVDEPSGLVPSTYIEEAPVIKTATALYDYDKQTEEELSFNENDKFNVFDLNDPDWILVGDLAKEKFGFVPSNYIQLDSTAEPAQHQQQQPQQVFQPPPQQQQAIPQQQTQIPINNFPPPPTHKDRTPDFPAPPAHRDRSPEHPPPTPEKDYPRMFEQEPRSLGSRYDRQPEGREEEEDEAPPPMPSRPTGSNIVAPEPVVGRSNTYEQEENVEHSEHSYDGEFFTWYIDEVDGRKKRAIKLSIGQGLVIIKPNTTNPKKLRMRSSSSLDNQWRIKDLITFNNEKKHVFLEFKNPAASLELHAGSKDVAEAIMAILGDLKGAEAAHGLREVAKASKASANERNRKIGRLLYDFEVQGDDELDCKEGDEVYIIDQKKSKDWWMVENIATRRQGVVPSTYIEIISTSNLDKLTDGPLRRKSTKSKGRVVETKDKRSSHHRTREERDRIREKDRAQRDKAPTSQTEQDKSMPNFHRVRTWIDSSGTFKVEAEFLGCVEGKIHLHKTNGVKIAVAADKLSVEDLEYVERVTGTSLEQYKEQVMKQQAKRAKSKSKSGATATPSSTNETKYASSATAAINDIAPPKPTRPQTTTQVSNNGAPLYDWFDFFLECGVDIGNCQRYTLNFEREQMDENILEDISPSLLRTLGLREGDIIRVMKYLDAKFDRKKTPEAPQQNGGLFIDKNGNLKNNSSSTEISKVSADALPSPVKTQVTSFTPVNESTQNNNKIEDDAWAMKPAARSSEDLLKPSPQPQTPQYTGALSDLVNIKPVGTSNENKAKTEQIPVEPSAPALQPMKTSNTAATSSIPPQGPGVTPQRTGTLVPVQKTGGLVPVQRTGAGLVPVQTGGYLPAQPTGFVPITAQPTGFIPIQATGILQPQLTFGIVPLQTGTSTFNANNKTAPPRPDTAPPPITTFGQQPTFQPAFVPLQTGVITMPQTTFGGQSQQLPTQITGGAPPQTSFNQPALVPTQRTGGQITGGFVPQSNFGKQITGGFMDTNTLSFGQQITGNAQQQPPPSTSFGQQITGGLPATSFGQQITGGFPQTSFGQQMTGGAPQTSFGQHITGGNMPNTSFGQPFSQQATSNPFPQMANQFTQQQQYQQQQPVMNQFQQQPQQQQQPFYNQFQSQPNLNQMTNMFQNTSISSPATFNQQIPTTTFGQQPQFEGFGSQPLQSQPTGMGFGNAPLQSQPTGKRANLQAATPDNPFGF</sequence>
<evidence type="ECO:0000250" key="1"/>
<evidence type="ECO:0000255" key="2">
    <source>
        <dbReference type="PROSITE-ProRule" id="PRU00192"/>
    </source>
</evidence>
<evidence type="ECO:0000256" key="3">
    <source>
        <dbReference type="SAM" id="MobiDB-lite"/>
    </source>
</evidence>
<evidence type="ECO:0000269" key="4">
    <source>
    </source>
</evidence>
<evidence type="ECO:0000269" key="5">
    <source>
    </source>
</evidence>
<evidence type="ECO:0000269" key="6">
    <source>
    </source>
</evidence>
<evidence type="ECO:0000305" key="7"/>
<comment type="function">
    <text evidence="5 6">Component of the PAN1 actin cytoskeleton-regulatory complex required for the internalization of endosomes during actin-coupled endocytosis. The complex links the site of endocytosis to the cell membrane-associated actin cytoskeleton. Required for assembly of the cortical actin cytoskeleton and for hyphal growth.</text>
</comment>
<comment type="subunit">
    <text evidence="1 6">Component of the PAN1 actin cytoskeleton-regulatory complex (By similarity). Interacts with PAN1 and CLN3.</text>
</comment>
<comment type="subcellular location">
    <subcellularLocation>
        <location evidence="1">Nucleus</location>
    </subcellularLocation>
    <subcellularLocation>
        <location>Cell membrane</location>
        <topology>Peripheral membrane protein</topology>
        <orientation>Cytoplasmic side</orientation>
    </subcellularLocation>
    <subcellularLocation>
        <location evidence="1">Endosome membrane</location>
        <topology evidence="1">Peripheral membrane protein</topology>
        <orientation evidence="1">Cytoplasmic side</orientation>
    </subcellularLocation>
    <subcellularLocation>
        <location evidence="1">Cytoplasm</location>
        <location evidence="1">Cytoskeleton</location>
        <location evidence="1">Actin patch</location>
    </subcellularLocation>
    <subcellularLocation>
        <location>Cell tip</location>
    </subcellularLocation>
    <text>Localizes in patches that are found concentrated at the hyphal tip.</text>
</comment>
<comment type="induction">
    <text evidence="4">Expression is regulated by NRG1 and MIG1.</text>
</comment>
<comment type="domain">
    <text evidence="5">The N-terminal SH3 domains are important for actin cytoskeleton assembly but not for localization.</text>
</comment>
<comment type="PTM">
    <text evidence="6">Phosphorylated by the CDC28-CLN3 complex and by PRK1. CDC28-CLN3 phosphorylation regulates cortical actin patch dynamics, as well as PRK1 phosphorylation and SLA1 association with PAN1. Rapidly dephosphorylated upon hyphal induction.</text>
</comment>
<comment type="similarity">
    <text evidence="7">Belongs to the SLA1 family.</text>
</comment>
<accession>Q5ALV2</accession>
<accession>A0A1D8PGF4</accession>